<comment type="function">
    <text evidence="2">dGTPase preferentially hydrolyzes dGTP over the other canonical NTPs.</text>
</comment>
<comment type="catalytic activity">
    <reaction evidence="2">
        <text>dGTP + H2O = 2'-deoxyguanosine + triphosphate + H(+)</text>
        <dbReference type="Rhea" id="RHEA:15193"/>
        <dbReference type="ChEBI" id="CHEBI:15377"/>
        <dbReference type="ChEBI" id="CHEBI:15378"/>
        <dbReference type="ChEBI" id="CHEBI:17172"/>
        <dbReference type="ChEBI" id="CHEBI:18036"/>
        <dbReference type="ChEBI" id="CHEBI:61429"/>
        <dbReference type="EC" id="3.1.5.1"/>
    </reaction>
</comment>
<comment type="cofactor">
    <cofactor evidence="2">
        <name>Mg(2+)</name>
        <dbReference type="ChEBI" id="CHEBI:18420"/>
    </cofactor>
</comment>
<comment type="subunit">
    <text evidence="2">Homotetramer.</text>
</comment>
<comment type="similarity">
    <text evidence="2">Belongs to the dGTPase family. Type 1 subfamily.</text>
</comment>
<reference key="1">
    <citation type="journal article" date="2001" name="Nature">
        <title>Complete genome sequence of Salmonella enterica serovar Typhimurium LT2.</title>
        <authorList>
            <person name="McClelland M."/>
            <person name="Sanderson K.E."/>
            <person name="Spieth J."/>
            <person name="Clifton S.W."/>
            <person name="Latreille P."/>
            <person name="Courtney L."/>
            <person name="Porwollik S."/>
            <person name="Ali J."/>
            <person name="Dante M."/>
            <person name="Du F."/>
            <person name="Hou S."/>
            <person name="Layman D."/>
            <person name="Leonard S."/>
            <person name="Nguyen C."/>
            <person name="Scott K."/>
            <person name="Holmes A."/>
            <person name="Grewal N."/>
            <person name="Mulvaney E."/>
            <person name="Ryan E."/>
            <person name="Sun H."/>
            <person name="Florea L."/>
            <person name="Miller W."/>
            <person name="Stoneking T."/>
            <person name="Nhan M."/>
            <person name="Waterston R."/>
            <person name="Wilson R.K."/>
        </authorList>
    </citation>
    <scope>NUCLEOTIDE SEQUENCE [LARGE SCALE GENOMIC DNA]</scope>
    <source>
        <strain>LT2 / SGSC1412 / ATCC 700720</strain>
    </source>
</reference>
<reference key="2">
    <citation type="journal article" date="1991" name="Mol. Microbiol.">
        <title>The role of a stress-response protein in Salmonella typhimurium virulence.</title>
        <authorList>
            <person name="Johnson K."/>
            <person name="Charles I."/>
            <person name="Dougan G."/>
            <person name="Pickard D."/>
            <person name="O'Gaora P."/>
            <person name="Costa G."/>
            <person name="Ali T."/>
            <person name="Miller I."/>
            <person name="Hormaeche C."/>
        </authorList>
    </citation>
    <scope>NUCLEOTIDE SEQUENCE [GENOMIC DNA] OF 419-505</scope>
    <source>
        <strain>C5</strain>
    </source>
</reference>
<proteinExistence type="inferred from homology"/>
<sequence length="505" mass="59536">MASIDFRNKINWHRRYRSPQGVKTEHEILRIFESDRGRIINSPAIRRLQQKTQVFPLERNAAVRTRLTHSMEVQQVGRYIAKEILSRLKEQDRLEEYGLDALTGPFESIVEMACLMHDIGNPPFGHFGEAAINDWFRQRLHPEDAESQPLTHDRCVVSSLRLQEGEENLNDIRRKVRQDICHFEGNAQGIRLVHTLMRMNLTWAQVGGILKYTRPAWWRGPVPDSHRYLMKKPGYYLSEEKYIARLRKELQLAPYSRFPLTWIMEAADDISYCVADLEDAVEKRIFSVEQLYHHLYHAWCHHEKDSLFELVVGNAWEKSRANTLSRSTEDQFFMYLRVNTLNKLVPYAAQRFIDNLPQIFAGTFNQALLEDASGFSRLLELYKNVAVEHVFSHPDVEQLELQGYRVISGLLDIYQPLLSLSLNDFRELVEKERLKRFPIESRLFQKLSTRHRLAYVEVVSKLPTDSAEYPVLEYYYRCRLIQDYISGMTDLYAWDEYRRLMAVEQ</sequence>
<keyword id="KW-0378">Hydrolase</keyword>
<keyword id="KW-0460">Magnesium</keyword>
<keyword id="KW-1185">Reference proteome</keyword>
<accession>P40733</accession>
<feature type="initiator methionine" description="Removed" evidence="1">
    <location>
        <position position="1"/>
    </location>
</feature>
<feature type="chain" id="PRO_0000205285" description="Deoxyguanosinetriphosphate triphosphohydrolase">
    <location>
        <begin position="2"/>
        <end position="505"/>
    </location>
</feature>
<feature type="domain" description="HD" evidence="3">
    <location>
        <begin position="66"/>
        <end position="273"/>
    </location>
</feature>
<dbReference type="EC" id="3.1.5.1" evidence="2"/>
<dbReference type="EMBL" id="AE006468">
    <property type="protein sequence ID" value="AAL19172.1"/>
    <property type="molecule type" value="Genomic_DNA"/>
</dbReference>
<dbReference type="EMBL" id="X54548">
    <property type="status" value="NOT_ANNOTATED_CDS"/>
    <property type="molecule type" value="Genomic_DNA"/>
</dbReference>
<dbReference type="RefSeq" id="NP_459213.1">
    <property type="nucleotide sequence ID" value="NC_003197.2"/>
</dbReference>
<dbReference type="RefSeq" id="WP_000146443.1">
    <property type="nucleotide sequence ID" value="NC_003197.2"/>
</dbReference>
<dbReference type="SMR" id="P40733"/>
<dbReference type="STRING" id="99287.STM0208"/>
<dbReference type="PaxDb" id="99287-STM0208"/>
<dbReference type="DNASU" id="1251726"/>
<dbReference type="GeneID" id="1251726"/>
<dbReference type="KEGG" id="stm:STM0208"/>
<dbReference type="PATRIC" id="fig|99287.12.peg.221"/>
<dbReference type="HOGENOM" id="CLU_028163_2_1_6"/>
<dbReference type="OMA" id="ICYTIID"/>
<dbReference type="PhylomeDB" id="P40733"/>
<dbReference type="BioCyc" id="SENT99287:STM0208-MONOMER"/>
<dbReference type="Proteomes" id="UP000001014">
    <property type="component" value="Chromosome"/>
</dbReference>
<dbReference type="GO" id="GO:0008832">
    <property type="term" value="F:dGTPase activity"/>
    <property type="evidence" value="ECO:0000318"/>
    <property type="project" value="GO_Central"/>
</dbReference>
<dbReference type="GO" id="GO:0000287">
    <property type="term" value="F:magnesium ion binding"/>
    <property type="evidence" value="ECO:0007669"/>
    <property type="project" value="UniProtKB-UniRule"/>
</dbReference>
<dbReference type="GO" id="GO:0006203">
    <property type="term" value="P:dGTP catabolic process"/>
    <property type="evidence" value="ECO:0000318"/>
    <property type="project" value="GO_Central"/>
</dbReference>
<dbReference type="CDD" id="cd00077">
    <property type="entry name" value="HDc"/>
    <property type="match status" value="1"/>
</dbReference>
<dbReference type="FunFam" id="1.10.3210.10:FF:000009">
    <property type="entry name" value="Deoxyguanosinetriphosphate triphosphohydrolase"/>
    <property type="match status" value="1"/>
</dbReference>
<dbReference type="FunFam" id="1.10.3210.10:FF:000010">
    <property type="entry name" value="Deoxyguanosinetriphosphate triphosphohydrolase"/>
    <property type="match status" value="1"/>
</dbReference>
<dbReference type="FunFam" id="1.10.3410.10:FF:000001">
    <property type="entry name" value="Deoxyguanosinetriphosphate triphosphohydrolase"/>
    <property type="match status" value="1"/>
</dbReference>
<dbReference type="Gene3D" id="1.10.3210.10">
    <property type="entry name" value="Hypothetical protein af1432"/>
    <property type="match status" value="2"/>
</dbReference>
<dbReference type="Gene3D" id="1.10.3410.10">
    <property type="entry name" value="putative deoxyguanosinetriphosphate triphosphohydrolase like domain"/>
    <property type="match status" value="1"/>
</dbReference>
<dbReference type="HAMAP" id="MF_00030">
    <property type="entry name" value="dGTPase_type1"/>
    <property type="match status" value="1"/>
</dbReference>
<dbReference type="InterPro" id="IPR023293">
    <property type="entry name" value="dGTP_triP_hydro_central_sf"/>
</dbReference>
<dbReference type="InterPro" id="IPR006261">
    <property type="entry name" value="dGTPase"/>
</dbReference>
<dbReference type="InterPro" id="IPR050135">
    <property type="entry name" value="dGTPase-like"/>
</dbReference>
<dbReference type="InterPro" id="IPR020779">
    <property type="entry name" value="dNTPase_1"/>
</dbReference>
<dbReference type="InterPro" id="IPR003607">
    <property type="entry name" value="HD/PDEase_dom"/>
</dbReference>
<dbReference type="InterPro" id="IPR006674">
    <property type="entry name" value="HD_domain"/>
</dbReference>
<dbReference type="NCBIfam" id="TIGR01353">
    <property type="entry name" value="dGTP_triPase"/>
    <property type="match status" value="1"/>
</dbReference>
<dbReference type="NCBIfam" id="NF003429">
    <property type="entry name" value="PRK04926.1"/>
    <property type="match status" value="1"/>
</dbReference>
<dbReference type="PANTHER" id="PTHR11373:SF32">
    <property type="entry name" value="DEOXYGUANOSINETRIPHOSPHATE TRIPHOSPHOHYDROLASE"/>
    <property type="match status" value="1"/>
</dbReference>
<dbReference type="PANTHER" id="PTHR11373">
    <property type="entry name" value="DEOXYNUCLEOSIDE TRIPHOSPHATE TRIPHOSPHOHYDROLASE"/>
    <property type="match status" value="1"/>
</dbReference>
<dbReference type="Pfam" id="PF01966">
    <property type="entry name" value="HD"/>
    <property type="match status" value="1"/>
</dbReference>
<dbReference type="SMART" id="SM00471">
    <property type="entry name" value="HDc"/>
    <property type="match status" value="1"/>
</dbReference>
<dbReference type="SUPFAM" id="SSF109604">
    <property type="entry name" value="HD-domain/PDEase-like"/>
    <property type="match status" value="1"/>
</dbReference>
<dbReference type="PROSITE" id="PS51831">
    <property type="entry name" value="HD"/>
    <property type="match status" value="1"/>
</dbReference>
<organism>
    <name type="scientific">Salmonella typhimurium (strain LT2 / SGSC1412 / ATCC 700720)</name>
    <dbReference type="NCBI Taxonomy" id="99287"/>
    <lineage>
        <taxon>Bacteria</taxon>
        <taxon>Pseudomonadati</taxon>
        <taxon>Pseudomonadota</taxon>
        <taxon>Gammaproteobacteria</taxon>
        <taxon>Enterobacterales</taxon>
        <taxon>Enterobacteriaceae</taxon>
        <taxon>Salmonella</taxon>
    </lineage>
</organism>
<name>DGTP_SALTY</name>
<gene>
    <name evidence="2" type="primary">dgt</name>
    <name type="ordered locus">STM0208</name>
</gene>
<evidence type="ECO:0000250" key="1"/>
<evidence type="ECO:0000255" key="2">
    <source>
        <dbReference type="HAMAP-Rule" id="MF_00030"/>
    </source>
</evidence>
<evidence type="ECO:0000255" key="3">
    <source>
        <dbReference type="PROSITE-ProRule" id="PRU01175"/>
    </source>
</evidence>
<protein>
    <recommendedName>
        <fullName evidence="2">Deoxyguanosinetriphosphate triphosphohydrolase</fullName>
        <shortName evidence="2">dGTP triphosphohydrolase</shortName>
        <shortName evidence="2">dGTPase</shortName>
        <ecNumber evidence="2">3.1.5.1</ecNumber>
    </recommendedName>
</protein>